<sequence length="374" mass="42417">MSNQHTLLTSNLLPVGSNISTWWNFGSMLLTCLMLQITTGFFLAIHYTANINLAFSSVIHITRDVPYGWIIQNTHAMGASMFFICIYMHIARGLYYGLYLNKMVWLSGVSLLITLMATAFFGYVLPWGQMSFWAATVITNLLTAIPYLGTVVTTWLWGGFSINDPTLTRFFALHFILPFIIISLSSIHIILLHNEGSNNPLGTNSDTDKIPFHPYHSYKDMLMTTILISILFYILSFTPNLFNDPENFTKANPMITPQHIKPEWYFLFAYGILRSIPNKLGGALALLLSIIILTSAPFTHTSHTRSMMFRPLAQILFWILATAFITITWTATKPVEPPFITISQWTSTLYFSFFMINPMLGLIENKITNTNTNT</sequence>
<comment type="function">
    <text evidence="2">Component of the ubiquinol-cytochrome c reductase complex (complex III or cytochrome b-c1 complex) that is part of the mitochondrial respiratory chain. The b-c1 complex mediates electron transfer from ubiquinol to cytochrome c. Contributes to the generation of a proton gradient across the mitochondrial membrane that is then used for ATP synthesis.</text>
</comment>
<comment type="cofactor">
    <cofactor evidence="2">
        <name>heme b</name>
        <dbReference type="ChEBI" id="CHEBI:60344"/>
    </cofactor>
    <text evidence="2">Binds 2 heme b groups non-covalently.</text>
</comment>
<comment type="subunit">
    <text evidence="2">The cytochrome bc1 complex contains 3 respiratory subunits (MT-CYB, CYC1 and UQCRFS1), 2 core proteins (UQCRC1 and UQCRC2) and probably 6 low-molecular weight proteins.</text>
</comment>
<comment type="subcellular location">
    <subcellularLocation>
        <location evidence="2">Mitochondrion inner membrane</location>
        <topology evidence="2">Multi-pass membrane protein</topology>
    </subcellularLocation>
</comment>
<comment type="miscellaneous">
    <text evidence="1">Heme 1 (or BL or b562) is low-potential and absorbs at about 562 nm, and heme 2 (or BH or b566) is high-potential and absorbs at about 566 nm.</text>
</comment>
<comment type="similarity">
    <text evidence="3 4">Belongs to the cytochrome b family.</text>
</comment>
<comment type="caution">
    <text evidence="2">The full-length protein contains only eight transmembrane helices, not nine as predicted by bioinformatics tools.</text>
</comment>
<geneLocation type="mitochondrion"/>
<feature type="chain" id="PRO_0000061165" description="Cytochrome b">
    <location>
        <begin position="1"/>
        <end position="374"/>
    </location>
</feature>
<feature type="transmembrane region" description="Helical" evidence="2">
    <location>
        <begin position="25"/>
        <end position="45"/>
    </location>
</feature>
<feature type="transmembrane region" description="Helical" evidence="2">
    <location>
        <begin position="69"/>
        <end position="90"/>
    </location>
</feature>
<feature type="transmembrane region" description="Helical" evidence="2">
    <location>
        <begin position="105"/>
        <end position="125"/>
    </location>
</feature>
<feature type="transmembrane region" description="Helical" evidence="2">
    <location>
        <begin position="170"/>
        <end position="190"/>
    </location>
</feature>
<feature type="transmembrane region" description="Helical" evidence="2">
    <location>
        <begin position="218"/>
        <end position="238"/>
    </location>
</feature>
<feature type="transmembrane region" description="Helical" evidence="2">
    <location>
        <begin position="280"/>
        <end position="300"/>
    </location>
</feature>
<feature type="transmembrane region" description="Helical" evidence="2">
    <location>
        <begin position="312"/>
        <end position="332"/>
    </location>
</feature>
<feature type="transmembrane region" description="Helical" evidence="2">
    <location>
        <begin position="339"/>
        <end position="358"/>
    </location>
</feature>
<feature type="binding site" description="axial binding residue" evidence="2">
    <location>
        <position position="75"/>
    </location>
    <ligand>
        <name>heme b</name>
        <dbReference type="ChEBI" id="CHEBI:60344"/>
        <label>b562</label>
    </ligand>
    <ligandPart>
        <name>Fe</name>
        <dbReference type="ChEBI" id="CHEBI:18248"/>
    </ligandPart>
</feature>
<feature type="binding site" description="axial binding residue" evidence="2">
    <location>
        <position position="89"/>
    </location>
    <ligand>
        <name>heme b</name>
        <dbReference type="ChEBI" id="CHEBI:60344"/>
        <label>b566</label>
    </ligand>
    <ligandPart>
        <name>Fe</name>
        <dbReference type="ChEBI" id="CHEBI:18248"/>
    </ligandPart>
</feature>
<feature type="binding site" description="axial binding residue" evidence="2">
    <location>
        <position position="174"/>
    </location>
    <ligand>
        <name>heme b</name>
        <dbReference type="ChEBI" id="CHEBI:60344"/>
        <label>b562</label>
    </ligand>
    <ligandPart>
        <name>Fe</name>
        <dbReference type="ChEBI" id="CHEBI:18248"/>
    </ligandPart>
</feature>
<feature type="binding site" description="axial binding residue" evidence="2">
    <location>
        <position position="188"/>
    </location>
    <ligand>
        <name>heme b</name>
        <dbReference type="ChEBI" id="CHEBI:60344"/>
        <label>b566</label>
    </ligand>
    <ligandPart>
        <name>Fe</name>
        <dbReference type="ChEBI" id="CHEBI:18248"/>
    </ligandPart>
</feature>
<feature type="binding site" evidence="2">
    <location>
        <position position="193"/>
    </location>
    <ligand>
        <name>a ubiquinone</name>
        <dbReference type="ChEBI" id="CHEBI:16389"/>
    </ligand>
</feature>
<name>CYB_CALBG</name>
<keyword id="KW-0249">Electron transport</keyword>
<keyword id="KW-0349">Heme</keyword>
<keyword id="KW-0408">Iron</keyword>
<keyword id="KW-0472">Membrane</keyword>
<keyword id="KW-0479">Metal-binding</keyword>
<keyword id="KW-0496">Mitochondrion</keyword>
<keyword id="KW-0999">Mitochondrion inner membrane</keyword>
<keyword id="KW-0679">Respiratory chain</keyword>
<keyword id="KW-0812">Transmembrane</keyword>
<keyword id="KW-1133">Transmembrane helix</keyword>
<keyword id="KW-0813">Transport</keyword>
<keyword id="KW-0830">Ubiquinone</keyword>
<dbReference type="EMBL" id="AF217812">
    <property type="protein sequence ID" value="AAF37231.1"/>
    <property type="molecule type" value="Genomic_DNA"/>
</dbReference>
<dbReference type="SMR" id="Q9MLL6"/>
<dbReference type="GO" id="GO:0005743">
    <property type="term" value="C:mitochondrial inner membrane"/>
    <property type="evidence" value="ECO:0007669"/>
    <property type="project" value="UniProtKB-SubCell"/>
</dbReference>
<dbReference type="GO" id="GO:0045275">
    <property type="term" value="C:respiratory chain complex III"/>
    <property type="evidence" value="ECO:0007669"/>
    <property type="project" value="InterPro"/>
</dbReference>
<dbReference type="GO" id="GO:0046872">
    <property type="term" value="F:metal ion binding"/>
    <property type="evidence" value="ECO:0007669"/>
    <property type="project" value="UniProtKB-KW"/>
</dbReference>
<dbReference type="GO" id="GO:0008121">
    <property type="term" value="F:ubiquinol-cytochrome-c reductase activity"/>
    <property type="evidence" value="ECO:0007669"/>
    <property type="project" value="InterPro"/>
</dbReference>
<dbReference type="GO" id="GO:0006122">
    <property type="term" value="P:mitochondrial electron transport, ubiquinol to cytochrome c"/>
    <property type="evidence" value="ECO:0007669"/>
    <property type="project" value="TreeGrafter"/>
</dbReference>
<dbReference type="CDD" id="cd00290">
    <property type="entry name" value="cytochrome_b_C"/>
    <property type="match status" value="1"/>
</dbReference>
<dbReference type="CDD" id="cd00284">
    <property type="entry name" value="Cytochrome_b_N"/>
    <property type="match status" value="1"/>
</dbReference>
<dbReference type="Gene3D" id="1.20.810.10">
    <property type="entry name" value="Cytochrome Bc1 Complex, Chain C"/>
    <property type="match status" value="1"/>
</dbReference>
<dbReference type="InterPro" id="IPR005798">
    <property type="entry name" value="Cyt_b/b6_C"/>
</dbReference>
<dbReference type="InterPro" id="IPR036150">
    <property type="entry name" value="Cyt_b/b6_C_sf"/>
</dbReference>
<dbReference type="InterPro" id="IPR005797">
    <property type="entry name" value="Cyt_b/b6_N"/>
</dbReference>
<dbReference type="InterPro" id="IPR027387">
    <property type="entry name" value="Cytb/b6-like_sf"/>
</dbReference>
<dbReference type="InterPro" id="IPR030689">
    <property type="entry name" value="Cytochrome_b"/>
</dbReference>
<dbReference type="InterPro" id="IPR048260">
    <property type="entry name" value="Cytochrome_b_C_euk/bac"/>
</dbReference>
<dbReference type="InterPro" id="IPR048259">
    <property type="entry name" value="Cytochrome_b_N_euk/bac"/>
</dbReference>
<dbReference type="InterPro" id="IPR016174">
    <property type="entry name" value="Di-haem_cyt_TM"/>
</dbReference>
<dbReference type="PANTHER" id="PTHR19271">
    <property type="entry name" value="CYTOCHROME B"/>
    <property type="match status" value="1"/>
</dbReference>
<dbReference type="PANTHER" id="PTHR19271:SF16">
    <property type="entry name" value="CYTOCHROME B"/>
    <property type="match status" value="1"/>
</dbReference>
<dbReference type="Pfam" id="PF00032">
    <property type="entry name" value="Cytochrom_B_C"/>
    <property type="match status" value="1"/>
</dbReference>
<dbReference type="Pfam" id="PF00033">
    <property type="entry name" value="Cytochrome_B"/>
    <property type="match status" value="1"/>
</dbReference>
<dbReference type="PIRSF" id="PIRSF038885">
    <property type="entry name" value="COB"/>
    <property type="match status" value="1"/>
</dbReference>
<dbReference type="SUPFAM" id="SSF81648">
    <property type="entry name" value="a domain/subunit of cytochrome bc1 complex (Ubiquinol-cytochrome c reductase)"/>
    <property type="match status" value="1"/>
</dbReference>
<dbReference type="SUPFAM" id="SSF81342">
    <property type="entry name" value="Transmembrane di-heme cytochromes"/>
    <property type="match status" value="1"/>
</dbReference>
<dbReference type="PROSITE" id="PS51003">
    <property type="entry name" value="CYTB_CTER"/>
    <property type="match status" value="1"/>
</dbReference>
<dbReference type="PROSITE" id="PS51002">
    <property type="entry name" value="CYTB_NTER"/>
    <property type="match status" value="1"/>
</dbReference>
<organism>
    <name type="scientific">Calliophis bivirgatus</name>
    <name type="common">Blue Malaysian coral snake</name>
    <name type="synonym">Maticora bivirgata</name>
    <dbReference type="NCBI Taxonomy" id="8633"/>
    <lineage>
        <taxon>Eukaryota</taxon>
        <taxon>Metazoa</taxon>
        <taxon>Chordata</taxon>
        <taxon>Craniata</taxon>
        <taxon>Vertebrata</taxon>
        <taxon>Euteleostomi</taxon>
        <taxon>Lepidosauria</taxon>
        <taxon>Squamata</taxon>
        <taxon>Bifurcata</taxon>
        <taxon>Unidentata</taxon>
        <taxon>Episquamata</taxon>
        <taxon>Toxicofera</taxon>
        <taxon>Serpentes</taxon>
        <taxon>Colubroidea</taxon>
        <taxon>Elapidae</taxon>
        <taxon>Elapinae</taxon>
        <taxon>Calliophis</taxon>
    </lineage>
</organism>
<evidence type="ECO:0000250" key="1"/>
<evidence type="ECO:0000250" key="2">
    <source>
        <dbReference type="UniProtKB" id="P00157"/>
    </source>
</evidence>
<evidence type="ECO:0000255" key="3">
    <source>
        <dbReference type="PROSITE-ProRule" id="PRU00967"/>
    </source>
</evidence>
<evidence type="ECO:0000255" key="4">
    <source>
        <dbReference type="PROSITE-ProRule" id="PRU00968"/>
    </source>
</evidence>
<reference key="1">
    <citation type="journal article" date="2000" name="Mol. Phylogenet. Evol.">
        <title>Phylogenetic relationships of elapid snakes based on cytochrome b mtDNA sequences.</title>
        <authorList>
            <person name="Slowinski J.B."/>
            <person name="Keogh J.S."/>
        </authorList>
    </citation>
    <scope>NUCLEOTIDE SEQUENCE [GENOMIC DNA]</scope>
</reference>
<proteinExistence type="inferred from homology"/>
<protein>
    <recommendedName>
        <fullName>Cytochrome b</fullName>
    </recommendedName>
    <alternativeName>
        <fullName>Complex III subunit 3</fullName>
    </alternativeName>
    <alternativeName>
        <fullName>Complex III subunit III</fullName>
    </alternativeName>
    <alternativeName>
        <fullName>Cytochrome b-c1 complex subunit 3</fullName>
    </alternativeName>
    <alternativeName>
        <fullName>Ubiquinol-cytochrome-c reductase complex cytochrome b subunit</fullName>
    </alternativeName>
</protein>
<gene>
    <name type="primary">MT-CYB</name>
    <name type="synonym">COB</name>
    <name type="synonym">CYTB</name>
    <name type="synonym">MTCYB</name>
</gene>
<accession>Q9MLL6</accession>